<proteinExistence type="inferred from homology"/>
<name>RK14_DAUCA</name>
<organism>
    <name type="scientific">Daucus carota</name>
    <name type="common">Wild carrot</name>
    <dbReference type="NCBI Taxonomy" id="4039"/>
    <lineage>
        <taxon>Eukaryota</taxon>
        <taxon>Viridiplantae</taxon>
        <taxon>Streptophyta</taxon>
        <taxon>Embryophyta</taxon>
        <taxon>Tracheophyta</taxon>
        <taxon>Spermatophyta</taxon>
        <taxon>Magnoliopsida</taxon>
        <taxon>eudicotyledons</taxon>
        <taxon>Gunneridae</taxon>
        <taxon>Pentapetalae</taxon>
        <taxon>asterids</taxon>
        <taxon>campanulids</taxon>
        <taxon>Apiales</taxon>
        <taxon>Apiaceae</taxon>
        <taxon>Apioideae</taxon>
        <taxon>Scandiceae</taxon>
        <taxon>Daucinae</taxon>
        <taxon>Daucus</taxon>
        <taxon>Daucus sect. Daucus</taxon>
    </lineage>
</organism>
<dbReference type="EMBL" id="DQ898156">
    <property type="protein sequence ID" value="ABI32460.1"/>
    <property type="molecule type" value="Genomic_DNA"/>
</dbReference>
<dbReference type="RefSeq" id="YP_740154.1">
    <property type="nucleotide sequence ID" value="NC_008325.1"/>
</dbReference>
<dbReference type="SMR" id="Q0G9S5"/>
<dbReference type="GeneID" id="4266781"/>
<dbReference type="OMA" id="EWEIART"/>
<dbReference type="GO" id="GO:0009507">
    <property type="term" value="C:chloroplast"/>
    <property type="evidence" value="ECO:0007669"/>
    <property type="project" value="UniProtKB-SubCell"/>
</dbReference>
<dbReference type="GO" id="GO:0022625">
    <property type="term" value="C:cytosolic large ribosomal subunit"/>
    <property type="evidence" value="ECO:0007669"/>
    <property type="project" value="TreeGrafter"/>
</dbReference>
<dbReference type="GO" id="GO:0070180">
    <property type="term" value="F:large ribosomal subunit rRNA binding"/>
    <property type="evidence" value="ECO:0007669"/>
    <property type="project" value="TreeGrafter"/>
</dbReference>
<dbReference type="GO" id="GO:0003735">
    <property type="term" value="F:structural constituent of ribosome"/>
    <property type="evidence" value="ECO:0007669"/>
    <property type="project" value="InterPro"/>
</dbReference>
<dbReference type="GO" id="GO:0006412">
    <property type="term" value="P:translation"/>
    <property type="evidence" value="ECO:0007669"/>
    <property type="project" value="UniProtKB-UniRule"/>
</dbReference>
<dbReference type="CDD" id="cd00337">
    <property type="entry name" value="Ribosomal_uL14"/>
    <property type="match status" value="1"/>
</dbReference>
<dbReference type="FunFam" id="2.40.150.20:FF:000002">
    <property type="entry name" value="50S ribosomal protein L14, chloroplastic"/>
    <property type="match status" value="1"/>
</dbReference>
<dbReference type="Gene3D" id="2.40.150.20">
    <property type="entry name" value="Ribosomal protein L14"/>
    <property type="match status" value="1"/>
</dbReference>
<dbReference type="HAMAP" id="MF_01367">
    <property type="entry name" value="Ribosomal_uL14"/>
    <property type="match status" value="1"/>
</dbReference>
<dbReference type="InterPro" id="IPR000218">
    <property type="entry name" value="Ribosomal_uL14"/>
</dbReference>
<dbReference type="InterPro" id="IPR005745">
    <property type="entry name" value="Ribosomal_uL14_bac-type"/>
</dbReference>
<dbReference type="InterPro" id="IPR019972">
    <property type="entry name" value="Ribosomal_uL14_CS"/>
</dbReference>
<dbReference type="InterPro" id="IPR036853">
    <property type="entry name" value="Ribosomal_uL14_sf"/>
</dbReference>
<dbReference type="NCBIfam" id="TIGR01067">
    <property type="entry name" value="rplN_bact"/>
    <property type="match status" value="1"/>
</dbReference>
<dbReference type="PANTHER" id="PTHR11761">
    <property type="entry name" value="50S/60S RIBOSOMAL PROTEIN L14/L23"/>
    <property type="match status" value="1"/>
</dbReference>
<dbReference type="PANTHER" id="PTHR11761:SF3">
    <property type="entry name" value="LARGE RIBOSOMAL SUBUNIT PROTEIN UL14M"/>
    <property type="match status" value="1"/>
</dbReference>
<dbReference type="Pfam" id="PF00238">
    <property type="entry name" value="Ribosomal_L14"/>
    <property type="match status" value="1"/>
</dbReference>
<dbReference type="SMART" id="SM01374">
    <property type="entry name" value="Ribosomal_L14"/>
    <property type="match status" value="1"/>
</dbReference>
<dbReference type="SUPFAM" id="SSF50193">
    <property type="entry name" value="Ribosomal protein L14"/>
    <property type="match status" value="1"/>
</dbReference>
<dbReference type="PROSITE" id="PS00049">
    <property type="entry name" value="RIBOSOMAL_L14"/>
    <property type="match status" value="1"/>
</dbReference>
<protein>
    <recommendedName>
        <fullName evidence="1">Large ribosomal subunit protein uL14c</fullName>
    </recommendedName>
    <alternativeName>
        <fullName evidence="2">50S ribosomal protein L14, chloroplastic</fullName>
    </alternativeName>
</protein>
<accession>Q0G9S5</accession>
<evidence type="ECO:0000255" key="1">
    <source>
        <dbReference type="HAMAP-Rule" id="MF_01367"/>
    </source>
</evidence>
<evidence type="ECO:0000305" key="2"/>
<reference key="1">
    <citation type="journal article" date="2006" name="BMC Genomics">
        <title>Complete plastid genome sequence of Daucus carota: implications for biotechnology and phylogeny of angiosperms.</title>
        <authorList>
            <person name="Ruhlman T."/>
            <person name="Lee S.-B."/>
            <person name="Jansen R.K."/>
            <person name="Hostetler J.B."/>
            <person name="Tallon L.J."/>
            <person name="Town C.D."/>
            <person name="Daniell H."/>
        </authorList>
    </citation>
    <scope>NUCLEOTIDE SEQUENCE [LARGE SCALE GENOMIC DNA]</scope>
    <source>
        <strain>cv. Danvers Half-long</strain>
    </source>
</reference>
<gene>
    <name evidence="1" type="primary">rpl14</name>
</gene>
<comment type="function">
    <text evidence="1">Binds to 23S rRNA.</text>
</comment>
<comment type="subunit">
    <text evidence="1">Part of the 50S ribosomal subunit.</text>
</comment>
<comment type="subcellular location">
    <subcellularLocation>
        <location>Plastid</location>
        <location>Chloroplast</location>
    </subcellularLocation>
</comment>
<comment type="similarity">
    <text evidence="1">Belongs to the universal ribosomal protein uL14 family.</text>
</comment>
<sequence length="122" mass="13495">MIQPQTLLNVADNSGARELMCIRIIGASNRRYAHIGDVIVAVIKEAVPNMPLARSEVVRAVIVRTCKELKRDNGMIIRYDDNAAVVIDQEGNPKGTRIFGAIARELRQLNFTKIVSLAPEVL</sequence>
<geneLocation type="chloroplast"/>
<feature type="chain" id="PRO_0000276342" description="Large ribosomal subunit protein uL14c">
    <location>
        <begin position="1"/>
        <end position="122"/>
    </location>
</feature>
<keyword id="KW-0150">Chloroplast</keyword>
<keyword id="KW-0934">Plastid</keyword>
<keyword id="KW-0687">Ribonucleoprotein</keyword>
<keyword id="KW-0689">Ribosomal protein</keyword>
<keyword id="KW-0694">RNA-binding</keyword>
<keyword id="KW-0699">rRNA-binding</keyword>